<keyword id="KW-0119">Carbohydrate metabolism</keyword>
<keyword id="KW-0325">Glycoprotein</keyword>
<keyword id="KW-0326">Glycosidase</keyword>
<keyword id="KW-0378">Hydrolase</keyword>
<keyword id="KW-0624">Polysaccharide degradation</keyword>
<keyword id="KW-1185">Reference proteome</keyword>
<keyword id="KW-0964">Secreted</keyword>
<keyword id="KW-0732">Signal</keyword>
<keyword id="KW-0858">Xylan degradation</keyword>
<feature type="signal peptide" evidence="2">
    <location>
        <begin position="1"/>
        <end position="23"/>
    </location>
</feature>
<feature type="chain" id="PRO_0000394091" description="Exo-1,4-beta-xylosidase bxlB">
    <location>
        <begin position="24"/>
        <end position="763"/>
    </location>
</feature>
<feature type="active site" evidence="1">
    <location>
        <position position="288"/>
    </location>
</feature>
<feature type="glycosylation site" description="N-linked (GlcNAc...) asparagine" evidence="2">
    <location>
        <position position="63"/>
    </location>
</feature>
<feature type="glycosylation site" description="N-linked (GlcNAc...) asparagine" evidence="2">
    <location>
        <position position="340"/>
    </location>
</feature>
<feature type="glycosylation site" description="N-linked (GlcNAc...) asparagine" evidence="2">
    <location>
        <position position="408"/>
    </location>
</feature>
<feature type="glycosylation site" description="N-linked (GlcNAc...) asparagine" evidence="2">
    <location>
        <position position="419"/>
    </location>
</feature>
<feature type="glycosylation site" description="N-linked (GlcNAc...) asparagine" evidence="2">
    <location>
        <position position="458"/>
    </location>
</feature>
<feature type="glycosylation site" description="N-linked (GlcNAc...) asparagine" evidence="2">
    <location>
        <position position="621"/>
    </location>
</feature>
<feature type="glycosylation site" description="N-linked (GlcNAc...) asparagine" evidence="2">
    <location>
        <position position="760"/>
    </location>
</feature>
<sequence length="763" mass="82200">MAVFKSWNLALLSSLFIPALCQSNYPDCTTGPLSELPICDTSLSPLERAKSLVSALTLEEKINNTGHEAAGSSRLGLPAYNWWNEALHGVAEKHGVSFEESGDFSYATSFPAPIVLGAAFNDALIRRVAEIISTEARAFSNSDHAGIDYWTPNVNPFKDPRWGRGQETPGEDPLHCSRYVKEFVGGLQGDDPEKPKVVATCKHLAAYDLEEWGGVSRFEFDAKVSAVDLLEYYLPPFKTCAVDASVGAFMCSYNALNGVPACADRYLLQTVLREHWGWEGPGHWVTGDCGAVERIQTYHHYVESGPEAAAAALNAGVDLDCGTWLPSYLGEAERQGLISNETLDAALTRLYTSLVQLGYFDPAEGQPLRSLGWDDVATSEAEELAKTVAIQGTVLLKNIDWTLPLKANGTLALIGPFINFTTELQSNYAGPAKHIPTMIEAAERLGYNVLTAPGTEVNSTSTDGFDDALAIAAEADALIFFGGIDNTVEEESLDRTRIDWPGNQEELILELAELGRPLTVVQFGGGQVDDSALLASAGVGAIVWAGYPSQAGGAGVFDVLTGKAAPAGRLPITQYPKSYVDEVPMTDMNLQPGTDNPGRTYRWYEDAVLPFGFGLHYTTFNVSWAKKAFGPYDAATLARGKNPSSNIVDTFSLAVTNTGDVASDYVALVFASAPELGAQPAPIKTLVGYSRASLIKPGETRKVDVEVTVAPLTRATEDGRVVLYPGEYTLLVDVNDEYPTAKFEIKGDVQVLEKFPLSGNDSD</sequence>
<gene>
    <name type="primary">bxlB</name>
    <name type="ORF">AN8401</name>
</gene>
<reference key="1">
    <citation type="journal article" date="2005" name="Nature">
        <title>Sequencing of Aspergillus nidulans and comparative analysis with A. fumigatus and A. oryzae.</title>
        <authorList>
            <person name="Galagan J.E."/>
            <person name="Calvo S.E."/>
            <person name="Cuomo C."/>
            <person name="Ma L.-J."/>
            <person name="Wortman J.R."/>
            <person name="Batzoglou S."/>
            <person name="Lee S.-I."/>
            <person name="Bastuerkmen M."/>
            <person name="Spevak C.C."/>
            <person name="Clutterbuck J."/>
            <person name="Kapitonov V."/>
            <person name="Jurka J."/>
            <person name="Scazzocchio C."/>
            <person name="Farman M.L."/>
            <person name="Butler J."/>
            <person name="Purcell S."/>
            <person name="Harris S."/>
            <person name="Braus G.H."/>
            <person name="Draht O."/>
            <person name="Busch S."/>
            <person name="D'Enfert C."/>
            <person name="Bouchier C."/>
            <person name="Goldman G.H."/>
            <person name="Bell-Pedersen D."/>
            <person name="Griffiths-Jones S."/>
            <person name="Doonan J.H."/>
            <person name="Yu J."/>
            <person name="Vienken K."/>
            <person name="Pain A."/>
            <person name="Freitag M."/>
            <person name="Selker E.U."/>
            <person name="Archer D.B."/>
            <person name="Penalva M.A."/>
            <person name="Oakley B.R."/>
            <person name="Momany M."/>
            <person name="Tanaka T."/>
            <person name="Kumagai T."/>
            <person name="Asai K."/>
            <person name="Machida M."/>
            <person name="Nierman W.C."/>
            <person name="Denning D.W."/>
            <person name="Caddick M.X."/>
            <person name="Hynes M."/>
            <person name="Paoletti M."/>
            <person name="Fischer R."/>
            <person name="Miller B.L."/>
            <person name="Dyer P.S."/>
            <person name="Sachs M.S."/>
            <person name="Osmani S.A."/>
            <person name="Birren B.W."/>
        </authorList>
    </citation>
    <scope>NUCLEOTIDE SEQUENCE [LARGE SCALE GENOMIC DNA]</scope>
    <source>
        <strain>FGSC A4 / ATCC 38163 / CBS 112.46 / NRRL 194 / M139</strain>
    </source>
</reference>
<reference key="2">
    <citation type="journal article" date="2009" name="Fungal Genet. Biol.">
        <title>The 2008 update of the Aspergillus nidulans genome annotation: a community effort.</title>
        <authorList>
            <person name="Wortman J.R."/>
            <person name="Gilsenan J.M."/>
            <person name="Joardar V."/>
            <person name="Deegan J."/>
            <person name="Clutterbuck J."/>
            <person name="Andersen M.R."/>
            <person name="Archer D."/>
            <person name="Bencina M."/>
            <person name="Braus G."/>
            <person name="Coutinho P."/>
            <person name="von Dohren H."/>
            <person name="Doonan J."/>
            <person name="Driessen A.J."/>
            <person name="Durek P."/>
            <person name="Espeso E."/>
            <person name="Fekete E."/>
            <person name="Flipphi M."/>
            <person name="Estrada C.G."/>
            <person name="Geysens S."/>
            <person name="Goldman G."/>
            <person name="de Groot P.W."/>
            <person name="Hansen K."/>
            <person name="Harris S.D."/>
            <person name="Heinekamp T."/>
            <person name="Helmstaedt K."/>
            <person name="Henrissat B."/>
            <person name="Hofmann G."/>
            <person name="Homan T."/>
            <person name="Horio T."/>
            <person name="Horiuchi H."/>
            <person name="James S."/>
            <person name="Jones M."/>
            <person name="Karaffa L."/>
            <person name="Karanyi Z."/>
            <person name="Kato M."/>
            <person name="Keller N."/>
            <person name="Kelly D.E."/>
            <person name="Kiel J.A."/>
            <person name="Kim J.M."/>
            <person name="van der Klei I.J."/>
            <person name="Klis F.M."/>
            <person name="Kovalchuk A."/>
            <person name="Krasevec N."/>
            <person name="Kubicek C.P."/>
            <person name="Liu B."/>
            <person name="Maccabe A."/>
            <person name="Meyer V."/>
            <person name="Mirabito P."/>
            <person name="Miskei M."/>
            <person name="Mos M."/>
            <person name="Mullins J."/>
            <person name="Nelson D.R."/>
            <person name="Nielsen J."/>
            <person name="Oakley B.R."/>
            <person name="Osmani S.A."/>
            <person name="Pakula T."/>
            <person name="Paszewski A."/>
            <person name="Paulsen I."/>
            <person name="Pilsyk S."/>
            <person name="Pocsi I."/>
            <person name="Punt P.J."/>
            <person name="Ram A.F."/>
            <person name="Ren Q."/>
            <person name="Robellet X."/>
            <person name="Robson G."/>
            <person name="Seiboth B."/>
            <person name="van Solingen P."/>
            <person name="Specht T."/>
            <person name="Sun J."/>
            <person name="Taheri-Talesh N."/>
            <person name="Takeshita N."/>
            <person name="Ussery D."/>
            <person name="vanKuyk P.A."/>
            <person name="Visser H."/>
            <person name="van de Vondervoort P.J."/>
            <person name="de Vries R.P."/>
            <person name="Walton J."/>
            <person name="Xiang X."/>
            <person name="Xiong Y."/>
            <person name="Zeng A.P."/>
            <person name="Brandt B.W."/>
            <person name="Cornell M.J."/>
            <person name="van den Hondel C.A."/>
            <person name="Visser J."/>
            <person name="Oliver S.G."/>
            <person name="Turner G."/>
        </authorList>
    </citation>
    <scope>GENOME REANNOTATION</scope>
    <source>
        <strain>FGSC A4 / ATCC 38163 / CBS 112.46 / NRRL 194 / M139</strain>
    </source>
</reference>
<reference key="3">
    <citation type="journal article" date="2006" name="Proc. Natl. Acad. Sci. U.S.A.">
        <title>Development and application of a suite of polysaccharide-degrading enzymes for analyzing plant cell walls.</title>
        <authorList>
            <person name="Bauer S."/>
            <person name="Vasu P."/>
            <person name="Persson S."/>
            <person name="Mort A.J."/>
            <person name="Somerville C.R."/>
        </authorList>
    </citation>
    <scope>FUNCTION</scope>
    <scope>BIOPHYSICOCHEMICAL PROPERTIES</scope>
</reference>
<organism>
    <name type="scientific">Emericella nidulans (strain FGSC A4 / ATCC 38163 / CBS 112.46 / NRRL 194 / M139)</name>
    <name type="common">Aspergillus nidulans</name>
    <dbReference type="NCBI Taxonomy" id="227321"/>
    <lineage>
        <taxon>Eukaryota</taxon>
        <taxon>Fungi</taxon>
        <taxon>Dikarya</taxon>
        <taxon>Ascomycota</taxon>
        <taxon>Pezizomycotina</taxon>
        <taxon>Eurotiomycetes</taxon>
        <taxon>Eurotiomycetidae</taxon>
        <taxon>Eurotiales</taxon>
        <taxon>Aspergillaceae</taxon>
        <taxon>Aspergillus</taxon>
        <taxon>Aspergillus subgen. Nidulantes</taxon>
    </lineage>
</organism>
<comment type="function">
    <text evidence="3">Xylan 1,4-beta-xylosidase involved in the hydrolysis of xylan, a major structural heterogeneous polysaccharide found in plant biomass representing the second most abundant polysaccharide in the biosphere, after cellulose. Active against rye arabinoxylan and xylohexaose, but not paranitrophenyl-beta-xyloside.</text>
</comment>
<comment type="catalytic activity">
    <reaction>
        <text>Hydrolysis of (1-&gt;4)-beta-D-xylans, to remove successive D-xylose residues from the non-reducing termini.</text>
        <dbReference type="EC" id="3.2.1.37"/>
    </reaction>
</comment>
<comment type="biophysicochemical properties">
    <phDependence>
        <text evidence="3">Optimum pH is 4.4.</text>
    </phDependence>
    <temperatureDependence>
        <text evidence="3">Optimum temperature is 48 degrees Celsius.</text>
    </temperatureDependence>
</comment>
<comment type="pathway">
    <text>Glycan degradation; xylan degradation.</text>
</comment>
<comment type="subcellular location">
    <subcellularLocation>
        <location evidence="4">Secreted</location>
    </subcellularLocation>
</comment>
<comment type="similarity">
    <text evidence="4">Belongs to the glycosyl hydrolase 3 family.</text>
</comment>
<proteinExistence type="evidence at protein level"/>
<accession>Q5ATH9</accession>
<accession>C8VEA1</accession>
<name>BXLB_EMENI</name>
<dbReference type="EC" id="3.2.1.37"/>
<dbReference type="EMBL" id="AACD01000153">
    <property type="protein sequence ID" value="EAA67023.1"/>
    <property type="molecule type" value="Genomic_DNA"/>
</dbReference>
<dbReference type="EMBL" id="BN001305">
    <property type="protein sequence ID" value="CBF80465.1"/>
    <property type="molecule type" value="Genomic_DNA"/>
</dbReference>
<dbReference type="RefSeq" id="XP_681670.1">
    <property type="nucleotide sequence ID" value="XM_676578.1"/>
</dbReference>
<dbReference type="SMR" id="Q5ATH9"/>
<dbReference type="STRING" id="227321.Q5ATH9"/>
<dbReference type="CAZy" id="GH3">
    <property type="family name" value="Glycoside Hydrolase Family 3"/>
</dbReference>
<dbReference type="GlyCosmos" id="Q5ATH9">
    <property type="glycosylation" value="7 sites, No reported glycans"/>
</dbReference>
<dbReference type="EnsemblFungi" id="CBF80465">
    <property type="protein sequence ID" value="CBF80465"/>
    <property type="gene ID" value="ANIA_08401"/>
</dbReference>
<dbReference type="KEGG" id="ani:ANIA_08401"/>
<dbReference type="VEuPathDB" id="FungiDB:AN8401"/>
<dbReference type="eggNOG" id="ENOG502QQ55">
    <property type="taxonomic scope" value="Eukaryota"/>
</dbReference>
<dbReference type="HOGENOM" id="CLU_004542_5_3_1"/>
<dbReference type="InParanoid" id="Q5ATH9"/>
<dbReference type="OMA" id="KVYTKVC"/>
<dbReference type="OrthoDB" id="47059at2759"/>
<dbReference type="UniPathway" id="UPA00114"/>
<dbReference type="Proteomes" id="UP000000560">
    <property type="component" value="Chromosome V"/>
</dbReference>
<dbReference type="GO" id="GO:0005576">
    <property type="term" value="C:extracellular region"/>
    <property type="evidence" value="ECO:0007669"/>
    <property type="project" value="UniProtKB-SubCell"/>
</dbReference>
<dbReference type="GO" id="GO:0046556">
    <property type="term" value="F:alpha-L-arabinofuranosidase activity"/>
    <property type="evidence" value="ECO:0000314"/>
    <property type="project" value="UniProtKB"/>
</dbReference>
<dbReference type="GO" id="GO:0009044">
    <property type="term" value="F:xylan 1,4-beta-xylosidase activity"/>
    <property type="evidence" value="ECO:0000314"/>
    <property type="project" value="UniProtKB"/>
</dbReference>
<dbReference type="GO" id="GO:0042285">
    <property type="term" value="F:xylosyltransferase activity"/>
    <property type="evidence" value="ECO:0000314"/>
    <property type="project" value="AspGD"/>
</dbReference>
<dbReference type="GO" id="GO:0031222">
    <property type="term" value="P:arabinan catabolic process"/>
    <property type="evidence" value="ECO:0000318"/>
    <property type="project" value="GO_Central"/>
</dbReference>
<dbReference type="GO" id="GO:0045493">
    <property type="term" value="P:xylan catabolic process"/>
    <property type="evidence" value="ECO:0000314"/>
    <property type="project" value="UniProtKB"/>
</dbReference>
<dbReference type="GO" id="GO:0045491">
    <property type="term" value="P:xylan metabolic process"/>
    <property type="evidence" value="ECO:0000314"/>
    <property type="project" value="AspGD"/>
</dbReference>
<dbReference type="FunFam" id="3.40.50.1700:FF:000007">
    <property type="entry name" value="Exo-1,4-beta-xylosidase xlnD"/>
    <property type="match status" value="1"/>
</dbReference>
<dbReference type="FunFam" id="3.20.20.300:FF:000013">
    <property type="entry name" value="Probable exo-1,4-beta-xylosidase xlnD"/>
    <property type="match status" value="1"/>
</dbReference>
<dbReference type="Gene3D" id="3.40.50.1700">
    <property type="entry name" value="Glycoside hydrolase family 3 C-terminal domain"/>
    <property type="match status" value="1"/>
</dbReference>
<dbReference type="Gene3D" id="3.20.20.300">
    <property type="entry name" value="Glycoside hydrolase, family 3, N-terminal domain"/>
    <property type="match status" value="1"/>
</dbReference>
<dbReference type="Gene3D" id="2.60.40.10">
    <property type="entry name" value="Immunoglobulins"/>
    <property type="match status" value="1"/>
</dbReference>
<dbReference type="InterPro" id="IPR044993">
    <property type="entry name" value="BXL"/>
</dbReference>
<dbReference type="InterPro" id="IPR026891">
    <property type="entry name" value="Fn3-like"/>
</dbReference>
<dbReference type="InterPro" id="IPR002772">
    <property type="entry name" value="Glyco_hydro_3_C"/>
</dbReference>
<dbReference type="InterPro" id="IPR036881">
    <property type="entry name" value="Glyco_hydro_3_C_sf"/>
</dbReference>
<dbReference type="InterPro" id="IPR001764">
    <property type="entry name" value="Glyco_hydro_3_N"/>
</dbReference>
<dbReference type="InterPro" id="IPR036962">
    <property type="entry name" value="Glyco_hydro_3_N_sf"/>
</dbReference>
<dbReference type="InterPro" id="IPR017853">
    <property type="entry name" value="Glycoside_hydrolase_SF"/>
</dbReference>
<dbReference type="InterPro" id="IPR013783">
    <property type="entry name" value="Ig-like_fold"/>
</dbReference>
<dbReference type="PANTHER" id="PTHR42721:SF3">
    <property type="entry name" value="BETA-D-XYLOSIDASE 5-RELATED"/>
    <property type="match status" value="1"/>
</dbReference>
<dbReference type="PANTHER" id="PTHR42721">
    <property type="entry name" value="SUGAR HYDROLASE-RELATED"/>
    <property type="match status" value="1"/>
</dbReference>
<dbReference type="Pfam" id="PF14310">
    <property type="entry name" value="Fn3-like"/>
    <property type="match status" value="1"/>
</dbReference>
<dbReference type="Pfam" id="PF00933">
    <property type="entry name" value="Glyco_hydro_3"/>
    <property type="match status" value="1"/>
</dbReference>
<dbReference type="Pfam" id="PF01915">
    <property type="entry name" value="Glyco_hydro_3_C"/>
    <property type="match status" value="1"/>
</dbReference>
<dbReference type="SMART" id="SM01217">
    <property type="entry name" value="Fn3_like"/>
    <property type="match status" value="1"/>
</dbReference>
<dbReference type="SUPFAM" id="SSF51445">
    <property type="entry name" value="(Trans)glycosidases"/>
    <property type="match status" value="1"/>
</dbReference>
<dbReference type="SUPFAM" id="SSF52279">
    <property type="entry name" value="Beta-D-glucan exohydrolase, C-terminal domain"/>
    <property type="match status" value="1"/>
</dbReference>
<evidence type="ECO:0000250" key="1"/>
<evidence type="ECO:0000255" key="2"/>
<evidence type="ECO:0000269" key="3">
    <source>
    </source>
</evidence>
<evidence type="ECO:0000305" key="4"/>
<protein>
    <recommendedName>
        <fullName>Exo-1,4-beta-xylosidase bxlB</fullName>
        <ecNumber>3.2.1.37</ecNumber>
    </recommendedName>
    <alternativeName>
        <fullName>1,4-beta-D-xylan xylohydrolase bxlB</fullName>
    </alternativeName>
    <alternativeName>
        <fullName>Beta-xylosidase bxlB</fullName>
    </alternativeName>
    <alternativeName>
        <fullName>Xylobiase bxlB</fullName>
    </alternativeName>
</protein>